<feature type="chain" id="PRO_0000224561" description="Valine--tRNA ligase">
    <location>
        <begin position="1"/>
        <end position="876"/>
    </location>
</feature>
<feature type="coiled-coil region" evidence="1">
    <location>
        <begin position="805"/>
        <end position="876"/>
    </location>
</feature>
<feature type="short sequence motif" description="'HIGH' region">
    <location>
        <begin position="44"/>
        <end position="54"/>
    </location>
</feature>
<feature type="short sequence motif" description="'KMSKS' region">
    <location>
        <begin position="520"/>
        <end position="524"/>
    </location>
</feature>
<feature type="binding site" evidence="1">
    <location>
        <position position="523"/>
    </location>
    <ligand>
        <name>ATP</name>
        <dbReference type="ChEBI" id="CHEBI:30616"/>
    </ligand>
</feature>
<dbReference type="EC" id="6.1.1.9" evidence="1"/>
<dbReference type="EMBL" id="BX571856">
    <property type="protein sequence ID" value="CAG40734.1"/>
    <property type="molecule type" value="Genomic_DNA"/>
</dbReference>
<dbReference type="RefSeq" id="WP_000425362.1">
    <property type="nucleotide sequence ID" value="NC_002952.2"/>
</dbReference>
<dbReference type="SMR" id="Q6GG42"/>
<dbReference type="KEGG" id="sar:SAR1743"/>
<dbReference type="HOGENOM" id="CLU_001493_0_2_9"/>
<dbReference type="Proteomes" id="UP000000596">
    <property type="component" value="Chromosome"/>
</dbReference>
<dbReference type="GO" id="GO:0005829">
    <property type="term" value="C:cytosol"/>
    <property type="evidence" value="ECO:0007669"/>
    <property type="project" value="TreeGrafter"/>
</dbReference>
<dbReference type="GO" id="GO:0002161">
    <property type="term" value="F:aminoacyl-tRNA deacylase activity"/>
    <property type="evidence" value="ECO:0007669"/>
    <property type="project" value="InterPro"/>
</dbReference>
<dbReference type="GO" id="GO:0005524">
    <property type="term" value="F:ATP binding"/>
    <property type="evidence" value="ECO:0007669"/>
    <property type="project" value="UniProtKB-UniRule"/>
</dbReference>
<dbReference type="GO" id="GO:0004832">
    <property type="term" value="F:valine-tRNA ligase activity"/>
    <property type="evidence" value="ECO:0007669"/>
    <property type="project" value="UniProtKB-UniRule"/>
</dbReference>
<dbReference type="GO" id="GO:0006438">
    <property type="term" value="P:valyl-tRNA aminoacylation"/>
    <property type="evidence" value="ECO:0007669"/>
    <property type="project" value="UniProtKB-UniRule"/>
</dbReference>
<dbReference type="CDD" id="cd07962">
    <property type="entry name" value="Anticodon_Ia_Val"/>
    <property type="match status" value="1"/>
</dbReference>
<dbReference type="CDD" id="cd00817">
    <property type="entry name" value="ValRS_core"/>
    <property type="match status" value="1"/>
</dbReference>
<dbReference type="FunFam" id="1.10.287.380:FF:000001">
    <property type="entry name" value="Valine--tRNA ligase"/>
    <property type="match status" value="1"/>
</dbReference>
<dbReference type="FunFam" id="1.10.730.10:FF:000014">
    <property type="entry name" value="Valine--tRNA ligase"/>
    <property type="match status" value="1"/>
</dbReference>
<dbReference type="FunFam" id="3.40.50.620:FF:000032">
    <property type="entry name" value="Valine--tRNA ligase"/>
    <property type="match status" value="1"/>
</dbReference>
<dbReference type="FunFam" id="3.40.50.620:FF:000098">
    <property type="entry name" value="Valine--tRNA ligase"/>
    <property type="match status" value="1"/>
</dbReference>
<dbReference type="FunFam" id="3.90.740.10:FF:000005">
    <property type="entry name" value="Valine--tRNA ligase, mitochondrial"/>
    <property type="match status" value="1"/>
</dbReference>
<dbReference type="Gene3D" id="3.40.50.620">
    <property type="entry name" value="HUPs"/>
    <property type="match status" value="2"/>
</dbReference>
<dbReference type="Gene3D" id="1.10.730.10">
    <property type="entry name" value="Isoleucyl-tRNA Synthetase, Domain 1"/>
    <property type="match status" value="1"/>
</dbReference>
<dbReference type="Gene3D" id="1.10.287.380">
    <property type="entry name" value="Valyl-tRNA synthetase, C-terminal domain"/>
    <property type="match status" value="1"/>
</dbReference>
<dbReference type="Gene3D" id="3.90.740.10">
    <property type="entry name" value="Valyl/Leucyl/Isoleucyl-tRNA synthetase, editing domain"/>
    <property type="match status" value="1"/>
</dbReference>
<dbReference type="HAMAP" id="MF_02004">
    <property type="entry name" value="Val_tRNA_synth_type1"/>
    <property type="match status" value="1"/>
</dbReference>
<dbReference type="InterPro" id="IPR001412">
    <property type="entry name" value="aa-tRNA-synth_I_CS"/>
</dbReference>
<dbReference type="InterPro" id="IPR002300">
    <property type="entry name" value="aa-tRNA-synth_Ia"/>
</dbReference>
<dbReference type="InterPro" id="IPR033705">
    <property type="entry name" value="Anticodon_Ia_Val"/>
</dbReference>
<dbReference type="InterPro" id="IPR013155">
    <property type="entry name" value="M/V/L/I-tRNA-synth_anticd-bd"/>
</dbReference>
<dbReference type="InterPro" id="IPR014729">
    <property type="entry name" value="Rossmann-like_a/b/a_fold"/>
</dbReference>
<dbReference type="InterPro" id="IPR010978">
    <property type="entry name" value="tRNA-bd_arm"/>
</dbReference>
<dbReference type="InterPro" id="IPR009080">
    <property type="entry name" value="tRNAsynth_Ia_anticodon-bd"/>
</dbReference>
<dbReference type="InterPro" id="IPR037118">
    <property type="entry name" value="Val-tRNA_synth_C_sf"/>
</dbReference>
<dbReference type="InterPro" id="IPR019499">
    <property type="entry name" value="Val-tRNA_synth_tRNA-bd"/>
</dbReference>
<dbReference type="InterPro" id="IPR009008">
    <property type="entry name" value="Val/Leu/Ile-tRNA-synth_edit"/>
</dbReference>
<dbReference type="InterPro" id="IPR002303">
    <property type="entry name" value="Valyl-tRNA_ligase"/>
</dbReference>
<dbReference type="NCBIfam" id="NF004349">
    <property type="entry name" value="PRK05729.1"/>
    <property type="match status" value="1"/>
</dbReference>
<dbReference type="NCBIfam" id="TIGR00422">
    <property type="entry name" value="valS"/>
    <property type="match status" value="1"/>
</dbReference>
<dbReference type="PANTHER" id="PTHR11946:SF93">
    <property type="entry name" value="VALINE--TRNA LIGASE, CHLOROPLASTIC_MITOCHONDRIAL 2"/>
    <property type="match status" value="1"/>
</dbReference>
<dbReference type="PANTHER" id="PTHR11946">
    <property type="entry name" value="VALYL-TRNA SYNTHETASES"/>
    <property type="match status" value="1"/>
</dbReference>
<dbReference type="Pfam" id="PF08264">
    <property type="entry name" value="Anticodon_1"/>
    <property type="match status" value="1"/>
</dbReference>
<dbReference type="Pfam" id="PF00133">
    <property type="entry name" value="tRNA-synt_1"/>
    <property type="match status" value="1"/>
</dbReference>
<dbReference type="Pfam" id="PF10458">
    <property type="entry name" value="Val_tRNA-synt_C"/>
    <property type="match status" value="1"/>
</dbReference>
<dbReference type="PRINTS" id="PR00986">
    <property type="entry name" value="TRNASYNTHVAL"/>
</dbReference>
<dbReference type="SUPFAM" id="SSF47323">
    <property type="entry name" value="Anticodon-binding domain of a subclass of class I aminoacyl-tRNA synthetases"/>
    <property type="match status" value="1"/>
</dbReference>
<dbReference type="SUPFAM" id="SSF52374">
    <property type="entry name" value="Nucleotidylyl transferase"/>
    <property type="match status" value="1"/>
</dbReference>
<dbReference type="SUPFAM" id="SSF46589">
    <property type="entry name" value="tRNA-binding arm"/>
    <property type="match status" value="1"/>
</dbReference>
<dbReference type="SUPFAM" id="SSF50677">
    <property type="entry name" value="ValRS/IleRS/LeuRS editing domain"/>
    <property type="match status" value="1"/>
</dbReference>
<dbReference type="PROSITE" id="PS00178">
    <property type="entry name" value="AA_TRNA_LIGASE_I"/>
    <property type="match status" value="1"/>
</dbReference>
<organism>
    <name type="scientific">Staphylococcus aureus (strain MRSA252)</name>
    <dbReference type="NCBI Taxonomy" id="282458"/>
    <lineage>
        <taxon>Bacteria</taxon>
        <taxon>Bacillati</taxon>
        <taxon>Bacillota</taxon>
        <taxon>Bacilli</taxon>
        <taxon>Bacillales</taxon>
        <taxon>Staphylococcaceae</taxon>
        <taxon>Staphylococcus</taxon>
    </lineage>
</organism>
<accession>Q6GG42</accession>
<protein>
    <recommendedName>
        <fullName evidence="1">Valine--tRNA ligase</fullName>
        <ecNumber evidence="1">6.1.1.9</ecNumber>
    </recommendedName>
    <alternativeName>
        <fullName evidence="1">Valyl-tRNA synthetase</fullName>
        <shortName evidence="1">ValRS</shortName>
    </alternativeName>
</protein>
<gene>
    <name evidence="1" type="primary">valS</name>
    <name type="ordered locus">SAR1743</name>
</gene>
<comment type="function">
    <text evidence="1">Catalyzes the attachment of valine to tRNA(Val). As ValRS can inadvertently accommodate and process structurally similar amino acids such as threonine, to avoid such errors, it has a 'posttransfer' editing activity that hydrolyzes mischarged Thr-tRNA(Val) in a tRNA-dependent manner.</text>
</comment>
<comment type="catalytic activity">
    <reaction evidence="1">
        <text>tRNA(Val) + L-valine + ATP = L-valyl-tRNA(Val) + AMP + diphosphate</text>
        <dbReference type="Rhea" id="RHEA:10704"/>
        <dbReference type="Rhea" id="RHEA-COMP:9672"/>
        <dbReference type="Rhea" id="RHEA-COMP:9708"/>
        <dbReference type="ChEBI" id="CHEBI:30616"/>
        <dbReference type="ChEBI" id="CHEBI:33019"/>
        <dbReference type="ChEBI" id="CHEBI:57762"/>
        <dbReference type="ChEBI" id="CHEBI:78442"/>
        <dbReference type="ChEBI" id="CHEBI:78537"/>
        <dbReference type="ChEBI" id="CHEBI:456215"/>
        <dbReference type="EC" id="6.1.1.9"/>
    </reaction>
</comment>
<comment type="subunit">
    <text evidence="1">Monomer.</text>
</comment>
<comment type="subcellular location">
    <subcellularLocation>
        <location evidence="1">Cytoplasm</location>
    </subcellularLocation>
</comment>
<comment type="domain">
    <text evidence="1">ValRS has two distinct active sites: one for aminoacylation and one for editing. The misactivated threonine is translocated from the active site to the editing site.</text>
</comment>
<comment type="domain">
    <text evidence="1">The C-terminal coiled-coil domain is crucial for aminoacylation activity.</text>
</comment>
<comment type="similarity">
    <text evidence="1">Belongs to the class-I aminoacyl-tRNA synthetase family. ValS type 1 subfamily.</text>
</comment>
<evidence type="ECO:0000255" key="1">
    <source>
        <dbReference type="HAMAP-Rule" id="MF_02004"/>
    </source>
</evidence>
<name>SYV_STAAR</name>
<reference key="1">
    <citation type="journal article" date="2004" name="Proc. Natl. Acad. Sci. U.S.A.">
        <title>Complete genomes of two clinical Staphylococcus aureus strains: evidence for the rapid evolution of virulence and drug resistance.</title>
        <authorList>
            <person name="Holden M.T.G."/>
            <person name="Feil E.J."/>
            <person name="Lindsay J.A."/>
            <person name="Peacock S.J."/>
            <person name="Day N.P.J."/>
            <person name="Enright M.C."/>
            <person name="Foster T.J."/>
            <person name="Moore C.E."/>
            <person name="Hurst L."/>
            <person name="Atkin R."/>
            <person name="Barron A."/>
            <person name="Bason N."/>
            <person name="Bentley S.D."/>
            <person name="Chillingworth C."/>
            <person name="Chillingworth T."/>
            <person name="Churcher C."/>
            <person name="Clark L."/>
            <person name="Corton C."/>
            <person name="Cronin A."/>
            <person name="Doggett J."/>
            <person name="Dowd L."/>
            <person name="Feltwell T."/>
            <person name="Hance Z."/>
            <person name="Harris B."/>
            <person name="Hauser H."/>
            <person name="Holroyd S."/>
            <person name="Jagels K."/>
            <person name="James K.D."/>
            <person name="Lennard N."/>
            <person name="Line A."/>
            <person name="Mayes R."/>
            <person name="Moule S."/>
            <person name="Mungall K."/>
            <person name="Ormond D."/>
            <person name="Quail M.A."/>
            <person name="Rabbinowitsch E."/>
            <person name="Rutherford K.M."/>
            <person name="Sanders M."/>
            <person name="Sharp S."/>
            <person name="Simmonds M."/>
            <person name="Stevens K."/>
            <person name="Whitehead S."/>
            <person name="Barrell B.G."/>
            <person name="Spratt B.G."/>
            <person name="Parkhill J."/>
        </authorList>
    </citation>
    <scope>NUCLEOTIDE SEQUENCE [LARGE SCALE GENOMIC DNA]</scope>
    <source>
        <strain>MRSA252</strain>
    </source>
</reference>
<proteinExistence type="inferred from homology"/>
<sequence length="876" mass="101750">MEMKPKYDPREVEAGRYEEWVKNGYFKPSEDKSKETYTIVIPPPNVTGKLHLGHAWDTTLQDIITRMKRMQGYDTLYLPGMDHAGIATQAKVEAKLNEQGITRYDLGREKFLEQAWDWKEEYASFIRAQWAKLGLGLDYSRERFTLDEGLSKAVKKVFVDLYNKGIIYRGERIINWDPKARTALSDIEVIHEDVQGAFYHFKYPYADVEGFIEIATTRPETMLGDTAIVVNPNDERYKDVIGKTVILPIVGRELPILADEYVDIDFGSGAMKVTPAHDPNDFEIGQRHQLENIIVMDENGKMNNKAGKYEGMDRFDCRKQLVEDLKEQDLVIKIEDHVHSVGHSERSGAVVEPYLSTQWFVRMEDLAKRSLDNQKTDDRIDFYPQRFEHTFNQWMENIRDWTISRQLWWGHQIPAWYHKETGEIYVGEEAPTDIENWQQDEDVLDTWFSSALWPFSTLGWPDLESEDFKRYYPTNALVTGYDIIFFWVARMIFQGLEFTDRRPFNDVLLHGLVRAEDGRKMSKSLGNGVDPMDVIDEYGADSLRYFLATGSSPGHDLRYSTEKVESVWNFINKIWNGARFSLMNIGEDFKVEDIDLSGNLSLADKWILTRLNETIATVTDLSDKYEFGEVGRALYNFIWDDFCDWYIEMSKIPMNGNDEEQKQVTRSVLSYTLDNIMRMLHPFMPFVTEKIWQSLPHEGETIVKASWPEVRESLIFEESKQTMQQLVEIIKSVRQSRVEVNTPLSKEIPILIQAKDKEIETTLSQNKDYLIKFCNPSTLNISTDVEIPEKAMTSVVIAGKVVLPLEGLIDMDKEISRLEKELAKLQSELDRVDKKLSNENFVSKAPEKVINEEKRKKQDYQEKYDGVKARIEQLKA</sequence>
<keyword id="KW-0030">Aminoacyl-tRNA synthetase</keyword>
<keyword id="KW-0067">ATP-binding</keyword>
<keyword id="KW-0175">Coiled coil</keyword>
<keyword id="KW-0963">Cytoplasm</keyword>
<keyword id="KW-0436">Ligase</keyword>
<keyword id="KW-0547">Nucleotide-binding</keyword>
<keyword id="KW-0648">Protein biosynthesis</keyword>